<comment type="function">
    <text evidence="1">Plays a major role in decreasing resistance to glycopeptide antibiotics.</text>
</comment>
<comment type="subcellular location">
    <subcellularLocation>
        <location evidence="1">Cell membrane</location>
        <topology evidence="1">Single-pass membrane protein</topology>
    </subcellularLocation>
</comment>
<comment type="induction">
    <text evidence="3">Induced by cell wall active antibiotics oxacillin, D-cycloserine or bacitracin.</text>
</comment>
<comment type="similarity">
    <text evidence="4">Belongs to the TcaA family.</text>
</comment>
<keyword id="KW-0046">Antibiotic resistance</keyword>
<keyword id="KW-1003">Cell membrane</keyword>
<keyword id="KW-0472">Membrane</keyword>
<keyword id="KW-0479">Metal-binding</keyword>
<keyword id="KW-0812">Transmembrane</keyword>
<keyword id="KW-1133">Transmembrane helix</keyword>
<keyword id="KW-0862">Zinc</keyword>
<keyword id="KW-0863">Zinc-finger</keyword>
<accession>A5IVD7</accession>
<protein>
    <recommendedName>
        <fullName>Membrane-associated protein TcaA</fullName>
    </recommendedName>
</protein>
<gene>
    <name type="primary">tcaA</name>
    <name type="ordered locus">SaurJH9_2380</name>
</gene>
<reference key="1">
    <citation type="submission" date="2007-05" db="EMBL/GenBank/DDBJ databases">
        <title>Complete sequence of chromosome of Staphylococcus aureus subsp. aureus JH9.</title>
        <authorList>
            <consortium name="US DOE Joint Genome Institute"/>
            <person name="Copeland A."/>
            <person name="Lucas S."/>
            <person name="Lapidus A."/>
            <person name="Barry K."/>
            <person name="Detter J.C."/>
            <person name="Glavina del Rio T."/>
            <person name="Hammon N."/>
            <person name="Israni S."/>
            <person name="Pitluck S."/>
            <person name="Chain P."/>
            <person name="Malfatti S."/>
            <person name="Shin M."/>
            <person name="Vergez L."/>
            <person name="Schmutz J."/>
            <person name="Larimer F."/>
            <person name="Land M."/>
            <person name="Hauser L."/>
            <person name="Kyrpides N."/>
            <person name="Kim E."/>
            <person name="Tomasz A."/>
            <person name="Richardson P."/>
        </authorList>
    </citation>
    <scope>NUCLEOTIDE SEQUENCE [LARGE SCALE GENOMIC DNA]</scope>
    <source>
        <strain>JH9</strain>
    </source>
</reference>
<reference key="2">
    <citation type="journal article" date="2006" name="J. Bacteriol.">
        <title>Overexpression of genes of the cell wall stimulon in clinical isolates of Staphylococcus aureus exhibiting vancomycin-intermediate-S. aureus-type resistance to vancomycin.</title>
        <authorList>
            <person name="McAleese F."/>
            <person name="Wu S.W."/>
            <person name="Sieradzki K."/>
            <person name="Dunman P."/>
            <person name="Murphy E."/>
            <person name="Projan S."/>
            <person name="Tomasz A."/>
        </authorList>
    </citation>
    <scope>INDUCTION</scope>
</reference>
<evidence type="ECO:0000250" key="1"/>
<evidence type="ECO:0000255" key="2"/>
<evidence type="ECO:0000269" key="3">
    <source>
    </source>
</evidence>
<evidence type="ECO:0000305" key="4"/>
<organism>
    <name type="scientific">Staphylococcus aureus (strain JH9)</name>
    <dbReference type="NCBI Taxonomy" id="359786"/>
    <lineage>
        <taxon>Bacteria</taxon>
        <taxon>Bacillati</taxon>
        <taxon>Bacillota</taxon>
        <taxon>Bacilli</taxon>
        <taxon>Bacillales</taxon>
        <taxon>Staphylococcaceae</taxon>
        <taxon>Staphylococcus</taxon>
    </lineage>
</organism>
<sequence>MKSCPKCGQQAQDDVQICTQCGHKFDSRQALYRKSTDEDIQTNNIKMRKMVPWAIVFFILILIIILFFLLRNFNSPEAQTKILVNAIENNDKQKVATLLSTKDNKVDSEEAKVYINYIKDEVGLKQFVSDLKNTVHKLNKSKTSVASYIQTRSGQNILRVSKNGTRYIFFDNMSFTAPTKQPIVKPKEKTKYEFKSGGKKKMVIAEANKVTPIGNFIPGTYRIPAMKSTENGDFAGYLKFDFRQSNSETVDVTEDFEEANITVTLKGDTKLNDSSKKVTINDREMAFSSSKTYGPYPQNKDITISASGKAKGKTFTTQTKTIKASDLKYNTEITLNFDSEDIEDYVEKKEKEENSLKNKLIEFFAGYSLANNAAFNQSDFDFVSSYIKKGSSFYDDVKKRVSKGSLMMISSPQIIDAEKHGDKITATVRLINENGKQVDKEYELEQGSQDRLQLIKTSEK</sequence>
<name>TCAA_STAA9</name>
<proteinExistence type="evidence at transcript level"/>
<feature type="chain" id="PRO_0000333162" description="Membrane-associated protein TcaA">
    <location>
        <begin position="1"/>
        <end position="460"/>
    </location>
</feature>
<feature type="topological domain" description="Cytoplasmic" evidence="2">
    <location>
        <begin position="1"/>
        <end position="49"/>
    </location>
</feature>
<feature type="transmembrane region" description="Helical" evidence="2">
    <location>
        <begin position="50"/>
        <end position="70"/>
    </location>
</feature>
<feature type="topological domain" description="Extracellular" evidence="2">
    <location>
        <begin position="71"/>
        <end position="460"/>
    </location>
</feature>
<feature type="zinc finger region" description="C4-type" evidence="2">
    <location>
        <begin position="4"/>
        <end position="21"/>
    </location>
</feature>
<dbReference type="EMBL" id="CP000703">
    <property type="protein sequence ID" value="ABQ50160.1"/>
    <property type="molecule type" value="Genomic_DNA"/>
</dbReference>
<dbReference type="RefSeq" id="WP_000833818.1">
    <property type="nucleotide sequence ID" value="NC_009487.1"/>
</dbReference>
<dbReference type="SMR" id="A5IVD7"/>
<dbReference type="KEGG" id="saj:SaurJH9_2380"/>
<dbReference type="HOGENOM" id="CLU_047245_0_0_9"/>
<dbReference type="GO" id="GO:0005886">
    <property type="term" value="C:plasma membrane"/>
    <property type="evidence" value="ECO:0007669"/>
    <property type="project" value="UniProtKB-SubCell"/>
</dbReference>
<dbReference type="GO" id="GO:0008270">
    <property type="term" value="F:zinc ion binding"/>
    <property type="evidence" value="ECO:0007669"/>
    <property type="project" value="UniProtKB-KW"/>
</dbReference>
<dbReference type="GO" id="GO:0046677">
    <property type="term" value="P:response to antibiotic"/>
    <property type="evidence" value="ECO:0007669"/>
    <property type="project" value="UniProtKB-KW"/>
</dbReference>
<dbReference type="InterPro" id="IPR023599">
    <property type="entry name" value="Mem_prot_TcaA"/>
</dbReference>
<dbReference type="InterPro" id="IPR054529">
    <property type="entry name" value="TcaA_2nd"/>
</dbReference>
<dbReference type="InterPro" id="IPR054530">
    <property type="entry name" value="TcaA_4th"/>
</dbReference>
<dbReference type="PANTHER" id="PTHR40038">
    <property type="entry name" value="MEMBRANE-ASSOCIATED PROTEIN TCAA"/>
    <property type="match status" value="1"/>
</dbReference>
<dbReference type="PANTHER" id="PTHR40038:SF1">
    <property type="entry name" value="MEMBRANE-ASSOCIATED PROTEIN TCAA"/>
    <property type="match status" value="1"/>
</dbReference>
<dbReference type="Pfam" id="PF22813">
    <property type="entry name" value="TcaA_2nd"/>
    <property type="match status" value="1"/>
</dbReference>
<dbReference type="Pfam" id="PF22820">
    <property type="entry name" value="TcaA_3rd_4th"/>
    <property type="match status" value="1"/>
</dbReference>
<dbReference type="Pfam" id="PF22819">
    <property type="entry name" value="TcaA_5th"/>
    <property type="match status" value="1"/>
</dbReference>
<dbReference type="PIRSF" id="PIRSF032522">
    <property type="entry name" value="TcaA"/>
    <property type="match status" value="1"/>
</dbReference>